<protein>
    <recommendedName>
        <fullName>Arginine/agmatine antiporter</fullName>
    </recommendedName>
</protein>
<proteinExistence type="inferred from homology"/>
<gene>
    <name type="primary">adiC</name>
    <name type="ordered locus">c5120</name>
</gene>
<evidence type="ECO:0000250" key="1">
    <source>
        <dbReference type="UniProtKB" id="P60061"/>
    </source>
</evidence>
<evidence type="ECO:0000250" key="2">
    <source>
        <dbReference type="UniProtKB" id="P60063"/>
    </source>
</evidence>
<evidence type="ECO:0000255" key="3"/>
<evidence type="ECO:0000305" key="4"/>
<reference key="1">
    <citation type="journal article" date="2002" name="Proc. Natl. Acad. Sci. U.S.A.">
        <title>Extensive mosaic structure revealed by the complete genome sequence of uropathogenic Escherichia coli.</title>
        <authorList>
            <person name="Welch R.A."/>
            <person name="Burland V."/>
            <person name="Plunkett G. III"/>
            <person name="Redford P."/>
            <person name="Roesch P."/>
            <person name="Rasko D."/>
            <person name="Buckles E.L."/>
            <person name="Liou S.-R."/>
            <person name="Boutin A."/>
            <person name="Hackett J."/>
            <person name="Stroud D."/>
            <person name="Mayhew G.F."/>
            <person name="Rose D.J."/>
            <person name="Zhou S."/>
            <person name="Schwartz D.C."/>
            <person name="Perna N.T."/>
            <person name="Mobley H.L.T."/>
            <person name="Donnenberg M.S."/>
            <person name="Blattner F.R."/>
        </authorList>
    </citation>
    <scope>NUCLEOTIDE SEQUENCE [LARGE SCALE GENOMIC DNA]</scope>
    <source>
        <strain>CFT073 / ATCC 700928 / UPEC</strain>
    </source>
</reference>
<keyword id="KW-0029">Amino-acid transport</keyword>
<keyword id="KW-0050">Antiport</keyword>
<keyword id="KW-0997">Cell inner membrane</keyword>
<keyword id="KW-1003">Cell membrane</keyword>
<keyword id="KW-0472">Membrane</keyword>
<keyword id="KW-1185">Reference proteome</keyword>
<keyword id="KW-0812">Transmembrane</keyword>
<keyword id="KW-1133">Transmembrane helix</keyword>
<keyword id="KW-0813">Transport</keyword>
<accession>P60062</accession>
<accession>P39268</accession>
<accession>P39269</accession>
<feature type="chain" id="PRO_0000054231" description="Arginine/agmatine antiporter">
    <location>
        <begin position="1"/>
        <end position="445"/>
    </location>
</feature>
<feature type="topological domain" description="Cytoplasmic" evidence="3">
    <location>
        <begin position="1"/>
        <end position="9"/>
    </location>
</feature>
<feature type="transmembrane region" description="Helical" evidence="3">
    <location>
        <begin position="10"/>
        <end position="30"/>
    </location>
</feature>
<feature type="topological domain" description="Periplasmic" evidence="3">
    <location>
        <begin position="31"/>
        <end position="38"/>
    </location>
</feature>
<feature type="transmembrane region" description="Helical" evidence="3">
    <location>
        <begin position="39"/>
        <end position="59"/>
    </location>
</feature>
<feature type="topological domain" description="Cytoplasmic" evidence="3">
    <location>
        <begin position="60"/>
        <end position="98"/>
    </location>
</feature>
<feature type="transmembrane region" description="Helical" evidence="3">
    <location>
        <begin position="99"/>
        <end position="119"/>
    </location>
</feature>
<feature type="topological domain" description="Periplasmic" evidence="3">
    <location>
        <begin position="120"/>
        <end position="122"/>
    </location>
</feature>
<feature type="transmembrane region" description="Helical" evidence="3">
    <location>
        <begin position="123"/>
        <end position="143"/>
    </location>
</feature>
<feature type="topological domain" description="Cytoplasmic" evidence="3">
    <location>
        <begin position="144"/>
        <end position="152"/>
    </location>
</feature>
<feature type="transmembrane region" description="Helical" evidence="3">
    <location>
        <begin position="153"/>
        <end position="173"/>
    </location>
</feature>
<feature type="topological domain" description="Periplasmic" evidence="3">
    <location>
        <begin position="174"/>
        <end position="196"/>
    </location>
</feature>
<feature type="transmembrane region" description="Helical" evidence="3">
    <location>
        <begin position="197"/>
        <end position="217"/>
    </location>
</feature>
<feature type="topological domain" description="Cytoplasmic" evidence="3">
    <location>
        <begin position="218"/>
        <end position="225"/>
    </location>
</feature>
<feature type="transmembrane region" description="Helical" evidence="3">
    <location>
        <begin position="226"/>
        <end position="246"/>
    </location>
</feature>
<feature type="topological domain" description="Periplasmic" evidence="3">
    <location>
        <begin position="247"/>
        <end position="275"/>
    </location>
</feature>
<feature type="transmembrane region" description="Helical" evidence="3">
    <location>
        <begin position="276"/>
        <end position="296"/>
    </location>
</feature>
<feature type="topological domain" description="Cytoplasmic" evidence="3">
    <location>
        <begin position="297"/>
        <end position="321"/>
    </location>
</feature>
<feature type="transmembrane region" description="Helical" evidence="3">
    <location>
        <begin position="322"/>
        <end position="342"/>
    </location>
</feature>
<feature type="topological domain" description="Periplasmic" evidence="3">
    <location>
        <begin position="343"/>
        <end position="355"/>
    </location>
</feature>
<feature type="transmembrane region" description="Helical" evidence="3">
    <location>
        <begin position="356"/>
        <end position="376"/>
    </location>
</feature>
<feature type="topological domain" description="Cytoplasmic" evidence="3">
    <location>
        <begin position="377"/>
        <end position="385"/>
    </location>
</feature>
<feature type="transmembrane region" description="Helical" evidence="3">
    <location>
        <begin position="386"/>
        <end position="406"/>
    </location>
</feature>
<feature type="topological domain" description="Periplasmic" evidence="3">
    <location>
        <begin position="407"/>
        <end position="408"/>
    </location>
</feature>
<feature type="transmembrane region" description="Helical" evidence="3">
    <location>
        <begin position="409"/>
        <end position="429"/>
    </location>
</feature>
<feature type="topological domain" description="Cytoplasmic" evidence="3">
    <location>
        <begin position="430"/>
        <end position="445"/>
    </location>
</feature>
<feature type="binding site" evidence="1">
    <location>
        <position position="23"/>
    </location>
    <ligand>
        <name>agmatine</name>
        <dbReference type="ChEBI" id="CHEBI:58145"/>
    </ligand>
</feature>
<feature type="binding site" evidence="1">
    <location>
        <position position="23"/>
    </location>
    <ligand>
        <name>L-arginine</name>
        <dbReference type="ChEBI" id="CHEBI:32682"/>
    </ligand>
</feature>
<feature type="binding site" evidence="1">
    <location>
        <position position="26"/>
    </location>
    <ligand>
        <name>L-arginine</name>
        <dbReference type="ChEBI" id="CHEBI:32682"/>
    </ligand>
</feature>
<feature type="binding site" evidence="1">
    <location>
        <position position="96"/>
    </location>
    <ligand>
        <name>agmatine</name>
        <dbReference type="ChEBI" id="CHEBI:58145"/>
    </ligand>
</feature>
<feature type="binding site" evidence="1">
    <location>
        <position position="96"/>
    </location>
    <ligand>
        <name>L-arginine</name>
        <dbReference type="ChEBI" id="CHEBI:32682"/>
    </ligand>
</feature>
<feature type="binding site" evidence="1">
    <location>
        <position position="97"/>
    </location>
    <ligand>
        <name>agmatine</name>
        <dbReference type="ChEBI" id="CHEBI:58145"/>
    </ligand>
</feature>
<feature type="binding site" evidence="1">
    <location>
        <position position="101"/>
    </location>
    <ligand>
        <name>agmatine</name>
        <dbReference type="ChEBI" id="CHEBI:58145"/>
    </ligand>
</feature>
<feature type="binding site" evidence="1">
    <location>
        <position position="202"/>
    </location>
    <ligand>
        <name>L-arginine</name>
        <dbReference type="ChEBI" id="CHEBI:32682"/>
    </ligand>
</feature>
<feature type="binding site" evidence="1">
    <location>
        <position position="205"/>
    </location>
    <ligand>
        <name>agmatine</name>
        <dbReference type="ChEBI" id="CHEBI:58145"/>
    </ligand>
</feature>
<feature type="binding site" evidence="1">
    <location>
        <position position="205"/>
    </location>
    <ligand>
        <name>L-arginine</name>
        <dbReference type="ChEBI" id="CHEBI:32682"/>
    </ligand>
</feature>
<feature type="binding site" evidence="1">
    <location>
        <position position="293"/>
    </location>
    <ligand>
        <name>agmatine</name>
        <dbReference type="ChEBI" id="CHEBI:58145"/>
    </ligand>
</feature>
<feature type="binding site" evidence="1">
    <location>
        <position position="357"/>
    </location>
    <ligand>
        <name>L-arginine</name>
        <dbReference type="ChEBI" id="CHEBI:32682"/>
    </ligand>
</feature>
<feature type="site" description="Cytoplasmic (distal) gate" evidence="1">
    <location>
        <position position="93"/>
    </location>
</feature>
<feature type="site" description="Periplasmic (proximal) gate" evidence="2">
    <location>
        <position position="202"/>
    </location>
</feature>
<feature type="site" description="Cytoplasmic (distal) gate" evidence="1">
    <location>
        <position position="208"/>
    </location>
</feature>
<feature type="site" description="Middle gate" evidence="2">
    <location>
        <position position="293"/>
    </location>
</feature>
<feature type="site" description="Cytoplasmic (distal) gate" evidence="1">
    <location>
        <position position="365"/>
    </location>
</feature>
<sequence>MSSDADAHKVGLIPVTLMVSGNIMGSGVFLLPANLASTGGIAIYGWLVTIIGALGLSMVYAKMSFLDPSPGGSYAYARRCFGPFLGYQTNVLYWLACWIGNIAMVVIGVGYLSYFFPILKDPLVLTITCVVVLWIFVLLNIVGPKMITRVQAVATVLALIPIVGIAVFGWFWFRGETYMAAWNVSGLGTFGAIQSTLNVTLWSFIGVESASVAAGVVKNPKRNVPIATIGGVLIAAVCYVLSTTAIMGMIPNAALRVSASPFGDAARMALGDTAGAIVSFCAAAGCLGSLGGWTLLAGQTAKAAADDGLFPPIFARVNKAGTPVAGLIIVGILMTIFQLSSISPNATKEFGLVSSVSVIFTLVPYLYTCAALLLLGHGHFGKARPAYLAVTTIAFLYCIWAVVGSGAKEVMWSFVTLMVITAMYALNYNRLHKNPYPLDAPISKD</sequence>
<dbReference type="EMBL" id="AE014075">
    <property type="protein sequence ID" value="AAN83544.1"/>
    <property type="molecule type" value="Genomic_DNA"/>
</dbReference>
<dbReference type="RefSeq" id="WP_000093154.1">
    <property type="nucleotide sequence ID" value="NZ_CP051263.1"/>
</dbReference>
<dbReference type="SMR" id="P60062"/>
<dbReference type="STRING" id="199310.c5120"/>
<dbReference type="GeneID" id="93777720"/>
<dbReference type="KEGG" id="ecc:c5120"/>
<dbReference type="eggNOG" id="COG0531">
    <property type="taxonomic scope" value="Bacteria"/>
</dbReference>
<dbReference type="HOGENOM" id="CLU_007946_1_0_6"/>
<dbReference type="BioCyc" id="ECOL199310:C5120-MONOMER"/>
<dbReference type="Proteomes" id="UP000001410">
    <property type="component" value="Chromosome"/>
</dbReference>
<dbReference type="GO" id="GO:0005886">
    <property type="term" value="C:plasma membrane"/>
    <property type="evidence" value="ECO:0007669"/>
    <property type="project" value="UniProtKB-SubCell"/>
</dbReference>
<dbReference type="GO" id="GO:0015297">
    <property type="term" value="F:antiporter activity"/>
    <property type="evidence" value="ECO:0007669"/>
    <property type="project" value="UniProtKB-KW"/>
</dbReference>
<dbReference type="GO" id="GO:0006865">
    <property type="term" value="P:amino acid transport"/>
    <property type="evidence" value="ECO:0007669"/>
    <property type="project" value="UniProtKB-KW"/>
</dbReference>
<dbReference type="FunFam" id="1.20.1740.10:FF:000011">
    <property type="entry name" value="Arginine/agmatine antiporter"/>
    <property type="match status" value="1"/>
</dbReference>
<dbReference type="Gene3D" id="1.20.1740.10">
    <property type="entry name" value="Amino acid/polyamine transporter I"/>
    <property type="match status" value="1"/>
</dbReference>
<dbReference type="InterPro" id="IPR002293">
    <property type="entry name" value="AA/rel_permease1"/>
</dbReference>
<dbReference type="InterPro" id="IPR050367">
    <property type="entry name" value="APC_superfamily"/>
</dbReference>
<dbReference type="NCBIfam" id="NF007929">
    <property type="entry name" value="PRK10644.1"/>
    <property type="match status" value="1"/>
</dbReference>
<dbReference type="PANTHER" id="PTHR42770">
    <property type="entry name" value="AMINO ACID TRANSPORTER-RELATED"/>
    <property type="match status" value="1"/>
</dbReference>
<dbReference type="PANTHER" id="PTHR42770:SF18">
    <property type="entry name" value="ARGININE_AGMATINE ANTIPORTER"/>
    <property type="match status" value="1"/>
</dbReference>
<dbReference type="Pfam" id="PF13520">
    <property type="entry name" value="AA_permease_2"/>
    <property type="match status" value="1"/>
</dbReference>
<dbReference type="PIRSF" id="PIRSF006060">
    <property type="entry name" value="AA_transporter"/>
    <property type="match status" value="1"/>
</dbReference>
<name>ADIC_ECOL6</name>
<comment type="function">
    <text evidence="2">Major component of the acid-resistance (AR) system allowing enteric pathogens to survive the acidic environment in the stomach. Exchanges extracellular arginine for its intracellular decarboxylation product agmatine (Agm) thereby expelling intracellular protons. Probably undergoes several conformational states in order to translocate the substrate across the membrane; keeps the substrate accessible to only 1 side of the membrane at a time by opening and closing 3 membrane-internal gates.</text>
</comment>
<comment type="catalytic activity">
    <reaction evidence="1">
        <text>agmatine(in) + L-arginine(out) = agmatine(out) + L-arginine(in)</text>
        <dbReference type="Rhea" id="RHEA:29651"/>
        <dbReference type="ChEBI" id="CHEBI:32682"/>
        <dbReference type="ChEBI" id="CHEBI:58145"/>
    </reaction>
</comment>
<comment type="subunit">
    <text evidence="1">Homodimer; each subunit has its own individual transport capacity.</text>
</comment>
<comment type="subcellular location">
    <subcellularLocation>
        <location evidence="1">Cell inner membrane</location>
        <topology evidence="3">Multi-pass membrane protein</topology>
    </subcellularLocation>
</comment>
<comment type="domain">
    <text evidence="1">Each subunit has 12 transmembrane (TM) helices; TM1 and TM6 are interrupted by short non-helical Gly-rich loops in the middle of their transmembrane spans. Each subunit has a central cavity which binds substrate.</text>
</comment>
<comment type="similarity">
    <text evidence="4">Belongs to the amino acid-polyamine-organocation (APC) superfamily. Basic amino acid/polyamine antiporter (APA) (TC 2.A.3.2) family.</text>
</comment>
<organism>
    <name type="scientific">Escherichia coli O6:H1 (strain CFT073 / ATCC 700928 / UPEC)</name>
    <dbReference type="NCBI Taxonomy" id="199310"/>
    <lineage>
        <taxon>Bacteria</taxon>
        <taxon>Pseudomonadati</taxon>
        <taxon>Pseudomonadota</taxon>
        <taxon>Gammaproteobacteria</taxon>
        <taxon>Enterobacterales</taxon>
        <taxon>Enterobacteriaceae</taxon>
        <taxon>Escherichia</taxon>
    </lineage>
</organism>